<proteinExistence type="evidence at protein level"/>
<dbReference type="EMBL" id="M21985">
    <property type="protein sequence ID" value="AAA36650.1"/>
    <property type="molecule type" value="mRNA"/>
</dbReference>
<dbReference type="EMBL" id="M29959">
    <property type="protein sequence ID" value="AAA36762.1"/>
    <property type="molecule type" value="mRNA"/>
</dbReference>
<dbReference type="EMBL" id="M29960">
    <property type="protein sequence ID" value="AAA36761.1"/>
    <property type="molecule type" value="mRNA"/>
</dbReference>
<dbReference type="EMBL" id="AK291319">
    <property type="protein sequence ID" value="BAF84008.1"/>
    <property type="molecule type" value="mRNA"/>
</dbReference>
<dbReference type="EMBL" id="AC011598">
    <property type="status" value="NOT_ANNOTATED_CDS"/>
    <property type="molecule type" value="Genomic_DNA"/>
</dbReference>
<dbReference type="EMBL" id="CH471054">
    <property type="protein sequence ID" value="EAW97518.1"/>
    <property type="molecule type" value="Genomic_DNA"/>
</dbReference>
<dbReference type="EMBL" id="BC040141">
    <property type="protein sequence ID" value="AAH40141.1"/>
    <property type="molecule type" value="mRNA"/>
</dbReference>
<dbReference type="CCDS" id="CCDS41821.1">
    <molecule id="P13056-2"/>
</dbReference>
<dbReference type="CCDS" id="CCDS44953.1">
    <molecule id="P13056-3"/>
</dbReference>
<dbReference type="CCDS" id="CCDS9051.1">
    <molecule id="P13056-1"/>
</dbReference>
<dbReference type="PIR" id="A31521">
    <property type="entry name" value="A31521"/>
</dbReference>
<dbReference type="PIR" id="A36738">
    <property type="entry name" value="A36738"/>
</dbReference>
<dbReference type="PIR" id="B36738">
    <property type="entry name" value="B36738"/>
</dbReference>
<dbReference type="RefSeq" id="NP_001027458.1">
    <molecule id="P13056-2"/>
    <property type="nucleotide sequence ID" value="NM_001032287.3"/>
</dbReference>
<dbReference type="RefSeq" id="NP_001120834.1">
    <molecule id="P13056-3"/>
    <property type="nucleotide sequence ID" value="NM_001127362.2"/>
</dbReference>
<dbReference type="RefSeq" id="NP_003288.2">
    <molecule id="P13056-1"/>
    <property type="nucleotide sequence ID" value="NM_003297.4"/>
</dbReference>
<dbReference type="BioGRID" id="113033">
    <property type="interactions" value="85"/>
</dbReference>
<dbReference type="CORUM" id="P13056"/>
<dbReference type="FunCoup" id="P13056">
    <property type="interactions" value="3896"/>
</dbReference>
<dbReference type="IntAct" id="P13056">
    <property type="interactions" value="43"/>
</dbReference>
<dbReference type="MINT" id="P13056"/>
<dbReference type="STRING" id="9606.ENSP00000333275"/>
<dbReference type="ChEMBL" id="CHEMBL1961787"/>
<dbReference type="GlyGen" id="P13056">
    <property type="glycosylation" value="2 sites, 1 O-linked glycan (2 sites)"/>
</dbReference>
<dbReference type="iPTMnet" id="P13056"/>
<dbReference type="PhosphoSitePlus" id="P13056"/>
<dbReference type="BioMuta" id="NR2C1"/>
<dbReference type="DMDM" id="226693548"/>
<dbReference type="jPOST" id="P13056"/>
<dbReference type="MassIVE" id="P13056"/>
<dbReference type="PaxDb" id="9606-ENSP00000333275"/>
<dbReference type="PeptideAtlas" id="P13056"/>
<dbReference type="ProteomicsDB" id="52893">
    <molecule id="P13056-1"/>
</dbReference>
<dbReference type="ProteomicsDB" id="52894">
    <molecule id="P13056-2"/>
</dbReference>
<dbReference type="ProteomicsDB" id="52895">
    <molecule id="P13056-3"/>
</dbReference>
<dbReference type="Pumba" id="P13056"/>
<dbReference type="Antibodypedia" id="4166">
    <property type="antibodies" value="462 antibodies from 37 providers"/>
</dbReference>
<dbReference type="DNASU" id="7181"/>
<dbReference type="Ensembl" id="ENST00000330677.7">
    <molecule id="P13056-3"/>
    <property type="protein sequence ID" value="ENSP00000328843.7"/>
    <property type="gene ID" value="ENSG00000120798.17"/>
</dbReference>
<dbReference type="Ensembl" id="ENST00000333003.10">
    <molecule id="P13056-1"/>
    <property type="protein sequence ID" value="ENSP00000333275.4"/>
    <property type="gene ID" value="ENSG00000120798.17"/>
</dbReference>
<dbReference type="Ensembl" id="ENST00000393101.7">
    <molecule id="P13056-2"/>
    <property type="protein sequence ID" value="ENSP00000376813.3"/>
    <property type="gene ID" value="ENSG00000120798.17"/>
</dbReference>
<dbReference type="GeneID" id="7181"/>
<dbReference type="KEGG" id="hsa:7181"/>
<dbReference type="MANE-Select" id="ENST00000333003.10">
    <property type="protein sequence ID" value="ENSP00000333275.4"/>
    <property type="RefSeq nucleotide sequence ID" value="NM_003297.4"/>
    <property type="RefSeq protein sequence ID" value="NP_003288.2"/>
</dbReference>
<dbReference type="UCSC" id="uc001tdm.6">
    <molecule id="P13056-1"/>
    <property type="organism name" value="human"/>
</dbReference>
<dbReference type="AGR" id="HGNC:7971"/>
<dbReference type="CTD" id="7181"/>
<dbReference type="DisGeNET" id="7181"/>
<dbReference type="GeneCards" id="NR2C1"/>
<dbReference type="HGNC" id="HGNC:7971">
    <property type="gene designation" value="NR2C1"/>
</dbReference>
<dbReference type="HPA" id="ENSG00000120798">
    <property type="expression patterns" value="Low tissue specificity"/>
</dbReference>
<dbReference type="MIM" id="601529">
    <property type="type" value="gene"/>
</dbReference>
<dbReference type="neXtProt" id="NX_P13056"/>
<dbReference type="OpenTargets" id="ENSG00000120798"/>
<dbReference type="PharmGKB" id="PA31754"/>
<dbReference type="VEuPathDB" id="HostDB:ENSG00000120798"/>
<dbReference type="eggNOG" id="KOG3575">
    <property type="taxonomic scope" value="Eukaryota"/>
</dbReference>
<dbReference type="GeneTree" id="ENSGT00940000158165"/>
<dbReference type="HOGENOM" id="CLU_007368_16_2_1"/>
<dbReference type="InParanoid" id="P13056"/>
<dbReference type="OMA" id="NCGELCV"/>
<dbReference type="OrthoDB" id="10024684at2759"/>
<dbReference type="PAN-GO" id="P13056">
    <property type="GO annotations" value="5 GO annotations based on evolutionary models"/>
</dbReference>
<dbReference type="PhylomeDB" id="P13056"/>
<dbReference type="TreeFam" id="TF316650"/>
<dbReference type="PathwayCommons" id="P13056"/>
<dbReference type="Reactome" id="R-HSA-383280">
    <property type="pathway name" value="Nuclear Receptor transcription pathway"/>
</dbReference>
<dbReference type="Reactome" id="R-HSA-4090294">
    <property type="pathway name" value="SUMOylation of intracellular receptors"/>
</dbReference>
<dbReference type="SignaLink" id="P13056"/>
<dbReference type="BioGRID-ORCS" id="7181">
    <property type="hits" value="10 hits in 1193 CRISPR screens"/>
</dbReference>
<dbReference type="CD-CODE" id="B5B9A610">
    <property type="entry name" value="PML body"/>
</dbReference>
<dbReference type="ChiTaRS" id="NR2C1">
    <property type="organism name" value="human"/>
</dbReference>
<dbReference type="GeneWiki" id="Testicular_receptor_2"/>
<dbReference type="GenomeRNAi" id="7181"/>
<dbReference type="Pharos" id="P13056">
    <property type="development level" value="Tbio"/>
</dbReference>
<dbReference type="PRO" id="PR:P13056"/>
<dbReference type="Proteomes" id="UP000005640">
    <property type="component" value="Chromosome 12"/>
</dbReference>
<dbReference type="RNAct" id="P13056">
    <property type="molecule type" value="protein"/>
</dbReference>
<dbReference type="Bgee" id="ENSG00000120798">
    <property type="expression patterns" value="Expressed in cerebellar hemisphere and 206 other cell types or tissues"/>
</dbReference>
<dbReference type="ExpressionAtlas" id="P13056">
    <property type="expression patterns" value="baseline and differential"/>
</dbReference>
<dbReference type="GO" id="GO:0000785">
    <property type="term" value="C:chromatin"/>
    <property type="evidence" value="ECO:0000247"/>
    <property type="project" value="NTNU_SB"/>
</dbReference>
<dbReference type="GO" id="GO:0005654">
    <property type="term" value="C:nucleoplasm"/>
    <property type="evidence" value="ECO:0000304"/>
    <property type="project" value="Reactome"/>
</dbReference>
<dbReference type="GO" id="GO:0016605">
    <property type="term" value="C:PML body"/>
    <property type="evidence" value="ECO:0007669"/>
    <property type="project" value="UniProtKB-SubCell"/>
</dbReference>
<dbReference type="GO" id="GO:0003677">
    <property type="term" value="F:DNA binding"/>
    <property type="evidence" value="ECO:0000304"/>
    <property type="project" value="ProtInc"/>
</dbReference>
<dbReference type="GO" id="GO:0000981">
    <property type="term" value="F:DNA-binding transcription factor activity, RNA polymerase II-specific"/>
    <property type="evidence" value="ECO:0000247"/>
    <property type="project" value="NTNU_SB"/>
</dbReference>
<dbReference type="GO" id="GO:0001227">
    <property type="term" value="F:DNA-binding transcription repressor activity, RNA polymerase II-specific"/>
    <property type="evidence" value="ECO:0007669"/>
    <property type="project" value="Ensembl"/>
</dbReference>
<dbReference type="GO" id="GO:0042826">
    <property type="term" value="F:histone deacetylase binding"/>
    <property type="evidence" value="ECO:0007669"/>
    <property type="project" value="Ensembl"/>
</dbReference>
<dbReference type="GO" id="GO:0004879">
    <property type="term" value="F:nuclear receptor activity"/>
    <property type="evidence" value="ECO:0000318"/>
    <property type="project" value="GO_Central"/>
</dbReference>
<dbReference type="GO" id="GO:0003707">
    <property type="term" value="F:nuclear steroid receptor activity"/>
    <property type="evidence" value="ECO:0000304"/>
    <property type="project" value="ProtInc"/>
</dbReference>
<dbReference type="GO" id="GO:0042803">
    <property type="term" value="F:protein homodimerization activity"/>
    <property type="evidence" value="ECO:0007669"/>
    <property type="project" value="Ensembl"/>
</dbReference>
<dbReference type="GO" id="GO:0000978">
    <property type="term" value="F:RNA polymerase II cis-regulatory region sequence-specific DNA binding"/>
    <property type="evidence" value="ECO:0000318"/>
    <property type="project" value="GO_Central"/>
</dbReference>
<dbReference type="GO" id="GO:1990837">
    <property type="term" value="F:sequence-specific double-stranded DNA binding"/>
    <property type="evidence" value="ECO:0000314"/>
    <property type="project" value="ARUK-UCL"/>
</dbReference>
<dbReference type="GO" id="GO:0038023">
    <property type="term" value="F:signaling receptor activity"/>
    <property type="evidence" value="ECO:0000304"/>
    <property type="project" value="ProtInc"/>
</dbReference>
<dbReference type="GO" id="GO:0008270">
    <property type="term" value="F:zinc ion binding"/>
    <property type="evidence" value="ECO:0007669"/>
    <property type="project" value="UniProtKB-KW"/>
</dbReference>
<dbReference type="GO" id="GO:0030154">
    <property type="term" value="P:cell differentiation"/>
    <property type="evidence" value="ECO:0000318"/>
    <property type="project" value="GO_Central"/>
</dbReference>
<dbReference type="GO" id="GO:0000122">
    <property type="term" value="P:negative regulation of transcription by RNA polymerase II"/>
    <property type="evidence" value="ECO:0000353"/>
    <property type="project" value="UniProtKB"/>
</dbReference>
<dbReference type="GO" id="GO:0048386">
    <property type="term" value="P:positive regulation of retinoic acid receptor signaling pathway"/>
    <property type="evidence" value="ECO:0007669"/>
    <property type="project" value="Ensembl"/>
</dbReference>
<dbReference type="GO" id="GO:0006357">
    <property type="term" value="P:regulation of transcription by RNA polymerase II"/>
    <property type="evidence" value="ECO:0000318"/>
    <property type="project" value="GO_Central"/>
</dbReference>
<dbReference type="CDD" id="cd06967">
    <property type="entry name" value="NR_DBD_TR2_like"/>
    <property type="match status" value="1"/>
</dbReference>
<dbReference type="CDD" id="cd06952">
    <property type="entry name" value="NR_LBD_TR2_like"/>
    <property type="match status" value="1"/>
</dbReference>
<dbReference type="FunFam" id="1.10.565.10:FF:000012">
    <property type="entry name" value="Nuclear receptor subfamily 2 group C member 1"/>
    <property type="match status" value="1"/>
</dbReference>
<dbReference type="FunFam" id="3.30.50.10:FF:000015">
    <property type="entry name" value="Nuclear receptor subfamily 2, group C, member 1"/>
    <property type="match status" value="1"/>
</dbReference>
<dbReference type="Gene3D" id="3.30.50.10">
    <property type="entry name" value="Erythroid Transcription Factor GATA-1, subunit A"/>
    <property type="match status" value="1"/>
</dbReference>
<dbReference type="Gene3D" id="1.10.565.10">
    <property type="entry name" value="Retinoid X Receptor"/>
    <property type="match status" value="1"/>
</dbReference>
<dbReference type="InterPro" id="IPR035500">
    <property type="entry name" value="NHR-like_dom_sf"/>
</dbReference>
<dbReference type="InterPro" id="IPR048245">
    <property type="entry name" value="NR2C1/2-like_DBD"/>
</dbReference>
<dbReference type="InterPro" id="IPR048246">
    <property type="entry name" value="NR2C1/2-like_LBD"/>
</dbReference>
<dbReference type="InterPro" id="IPR000536">
    <property type="entry name" value="Nucl_hrmn_rcpt_lig-bd"/>
</dbReference>
<dbReference type="InterPro" id="IPR050274">
    <property type="entry name" value="Nuclear_hormone_rcpt_NR2"/>
</dbReference>
<dbReference type="InterPro" id="IPR001723">
    <property type="entry name" value="Nuclear_hrmn_rcpt"/>
</dbReference>
<dbReference type="InterPro" id="IPR001628">
    <property type="entry name" value="Znf_hrmn_rcpt"/>
</dbReference>
<dbReference type="InterPro" id="IPR013088">
    <property type="entry name" value="Znf_NHR/GATA"/>
</dbReference>
<dbReference type="PANTHER" id="PTHR24083">
    <property type="entry name" value="NUCLEAR HORMONE RECEPTOR"/>
    <property type="match status" value="1"/>
</dbReference>
<dbReference type="Pfam" id="PF00104">
    <property type="entry name" value="Hormone_recep"/>
    <property type="match status" value="1"/>
</dbReference>
<dbReference type="Pfam" id="PF00105">
    <property type="entry name" value="zf-C4"/>
    <property type="match status" value="1"/>
</dbReference>
<dbReference type="PRINTS" id="PR00398">
    <property type="entry name" value="STRDHORMONER"/>
</dbReference>
<dbReference type="PRINTS" id="PR00047">
    <property type="entry name" value="STROIDFINGER"/>
</dbReference>
<dbReference type="SMART" id="SM00430">
    <property type="entry name" value="HOLI"/>
    <property type="match status" value="1"/>
</dbReference>
<dbReference type="SMART" id="SM00399">
    <property type="entry name" value="ZnF_C4"/>
    <property type="match status" value="1"/>
</dbReference>
<dbReference type="SUPFAM" id="SSF57716">
    <property type="entry name" value="Glucocorticoid receptor-like (DNA-binding domain)"/>
    <property type="match status" value="1"/>
</dbReference>
<dbReference type="SUPFAM" id="SSF48508">
    <property type="entry name" value="Nuclear receptor ligand-binding domain"/>
    <property type="match status" value="1"/>
</dbReference>
<dbReference type="PROSITE" id="PS51843">
    <property type="entry name" value="NR_LBD"/>
    <property type="match status" value="1"/>
</dbReference>
<dbReference type="PROSITE" id="PS00031">
    <property type="entry name" value="NUCLEAR_REC_DBD_1"/>
    <property type="match status" value="1"/>
</dbReference>
<dbReference type="PROSITE" id="PS51030">
    <property type="entry name" value="NUCLEAR_REC_DBD_2"/>
    <property type="match status" value="1"/>
</dbReference>
<feature type="chain" id="PRO_0000053586" description="Nuclear receptor subfamily 2 group C member 1">
    <location>
        <begin position="1"/>
        <end position="603"/>
    </location>
</feature>
<feature type="domain" description="NR LBD" evidence="4">
    <location>
        <begin position="348"/>
        <end position="590"/>
    </location>
</feature>
<feature type="DNA-binding region" description="Nuclear receptor" evidence="3">
    <location>
        <begin position="110"/>
        <end position="185"/>
    </location>
</feature>
<feature type="zinc finger region" description="NR C4-type" evidence="3">
    <location>
        <begin position="113"/>
        <end position="133"/>
    </location>
</feature>
<feature type="zinc finger region" description="NR C4-type" evidence="3">
    <location>
        <begin position="149"/>
        <end position="173"/>
    </location>
</feature>
<feature type="region of interest" description="Required for interaction with KAT2B" evidence="1">
    <location>
        <begin position="1"/>
        <end position="178"/>
    </location>
</feature>
<feature type="region of interest" description="Required for interaction with NRIP1" evidence="1">
    <location>
        <begin position="584"/>
        <end position="603"/>
    </location>
</feature>
<feature type="modified residue" description="Phosphoserine" evidence="2">
    <location>
        <position position="197"/>
    </location>
</feature>
<feature type="modified residue" description="Phosphoserine" evidence="11 12">
    <location>
        <position position="215"/>
    </location>
</feature>
<feature type="modified residue" description="Phosphothreonine" evidence="11">
    <location>
        <position position="220"/>
    </location>
</feature>
<feature type="modified residue" description="Phosphothreonine; by MAPK1" evidence="2">
    <location>
        <position position="222"/>
    </location>
</feature>
<feature type="modified residue" description="Phosphoserine; by PKC" evidence="2">
    <location>
        <position position="581"/>
    </location>
</feature>
<feature type="cross-link" description="Glycyl lysine isopeptide (Lys-Gly) (interchain with G-Cter in SUMO2)" evidence="13">
    <location>
        <position position="250"/>
    </location>
</feature>
<feature type="cross-link" description="Glycyl lysine isopeptide (Lys-Gly) (interchain with G-Cter in SUMO2)" evidence="13">
    <location>
        <position position="588"/>
    </location>
</feature>
<feature type="splice variant" id="VSP_036855" description="In isoform 2." evidence="7 8">
    <original>DKM</original>
    <variation>AEG</variation>
    <location>
        <begin position="465"/>
        <end position="467"/>
    </location>
</feature>
<feature type="splice variant" id="VSP_036856" description="In isoform 3." evidence="9">
    <original>KMSTERRKLLMEHIFKLQ</original>
    <variation>AKVIAALIHFTRRAITDL</variation>
    <location>
        <begin position="466"/>
        <end position="483"/>
    </location>
</feature>
<feature type="splice variant" id="VSP_036857" description="In isoform 2." evidence="7 8">
    <location>
        <begin position="468"/>
        <end position="603"/>
    </location>
</feature>
<feature type="splice variant" id="VSP_036858" description="In isoform 3." evidence="9">
    <location>
        <begin position="484"/>
        <end position="603"/>
    </location>
</feature>
<feature type="sequence conflict" description="In Ref. 3; BAF84008." evidence="10" ref="3">
    <original>N</original>
    <variation>K</variation>
    <location>
        <position position="291"/>
    </location>
</feature>
<feature type="sequence conflict" description="In Ref. 3; BAF84008." evidence="10" ref="3">
    <original>D</original>
    <variation>N</variation>
    <location>
        <position position="304"/>
    </location>
</feature>
<feature type="sequence conflict" description="In Ref. 2; AAA36761." evidence="10" ref="2">
    <original>Q</original>
    <variation>L</variation>
    <location>
        <position position="520"/>
    </location>
</feature>
<organism>
    <name type="scientific">Homo sapiens</name>
    <name type="common">Human</name>
    <dbReference type="NCBI Taxonomy" id="9606"/>
    <lineage>
        <taxon>Eukaryota</taxon>
        <taxon>Metazoa</taxon>
        <taxon>Chordata</taxon>
        <taxon>Craniata</taxon>
        <taxon>Vertebrata</taxon>
        <taxon>Euteleostomi</taxon>
        <taxon>Mammalia</taxon>
        <taxon>Eutheria</taxon>
        <taxon>Euarchontoglires</taxon>
        <taxon>Primates</taxon>
        <taxon>Haplorrhini</taxon>
        <taxon>Catarrhini</taxon>
        <taxon>Hominidae</taxon>
        <taxon>Homo</taxon>
    </lineage>
</organism>
<name>NR2C1_HUMAN</name>
<reference key="1">
    <citation type="journal article" date="1988" name="Biochem. Biophys. Res. Commun.">
        <title>Identification of a new member of the steroid receptor super-family by cloning and sequence analysis.</title>
        <authorList>
            <person name="Chang C."/>
            <person name="Kokontis J."/>
        </authorList>
    </citation>
    <scope>NUCLEOTIDE SEQUENCE [MRNA] (ISOFORM 3)</scope>
    <source>
        <tissue>Testis</tissue>
    </source>
</reference>
<reference key="2">
    <citation type="journal article" date="1989" name="Biochem. Biophys. Res. Commun.">
        <title>Molecular cloning of new human TR2 receptors: a class of steroid receptor with multiple ligand-binding domains.</title>
        <authorList>
            <person name="Chang C."/>
            <person name="Kokontis J."/>
            <person name="Acakpo-Satchivi L."/>
            <person name="Liao S."/>
            <person name="Takeda H."/>
            <person name="Chang Y."/>
        </authorList>
    </citation>
    <scope>NUCLEOTIDE SEQUENCE [MRNA] (ISOFORMS 1 AND 2)</scope>
</reference>
<reference key="3">
    <citation type="journal article" date="2004" name="Nat. Genet.">
        <title>Complete sequencing and characterization of 21,243 full-length human cDNAs.</title>
        <authorList>
            <person name="Ota T."/>
            <person name="Suzuki Y."/>
            <person name="Nishikawa T."/>
            <person name="Otsuki T."/>
            <person name="Sugiyama T."/>
            <person name="Irie R."/>
            <person name="Wakamatsu A."/>
            <person name="Hayashi K."/>
            <person name="Sato H."/>
            <person name="Nagai K."/>
            <person name="Kimura K."/>
            <person name="Makita H."/>
            <person name="Sekine M."/>
            <person name="Obayashi M."/>
            <person name="Nishi T."/>
            <person name="Shibahara T."/>
            <person name="Tanaka T."/>
            <person name="Ishii S."/>
            <person name="Yamamoto J."/>
            <person name="Saito K."/>
            <person name="Kawai Y."/>
            <person name="Isono Y."/>
            <person name="Nakamura Y."/>
            <person name="Nagahari K."/>
            <person name="Murakami K."/>
            <person name="Yasuda T."/>
            <person name="Iwayanagi T."/>
            <person name="Wagatsuma M."/>
            <person name="Shiratori A."/>
            <person name="Sudo H."/>
            <person name="Hosoiri T."/>
            <person name="Kaku Y."/>
            <person name="Kodaira H."/>
            <person name="Kondo H."/>
            <person name="Sugawara M."/>
            <person name="Takahashi M."/>
            <person name="Kanda K."/>
            <person name="Yokoi T."/>
            <person name="Furuya T."/>
            <person name="Kikkawa E."/>
            <person name="Omura Y."/>
            <person name="Abe K."/>
            <person name="Kamihara K."/>
            <person name="Katsuta N."/>
            <person name="Sato K."/>
            <person name="Tanikawa M."/>
            <person name="Yamazaki M."/>
            <person name="Ninomiya K."/>
            <person name="Ishibashi T."/>
            <person name="Yamashita H."/>
            <person name="Murakawa K."/>
            <person name="Fujimori K."/>
            <person name="Tanai H."/>
            <person name="Kimata M."/>
            <person name="Watanabe M."/>
            <person name="Hiraoka S."/>
            <person name="Chiba Y."/>
            <person name="Ishida S."/>
            <person name="Ono Y."/>
            <person name="Takiguchi S."/>
            <person name="Watanabe S."/>
            <person name="Yosida M."/>
            <person name="Hotuta T."/>
            <person name="Kusano J."/>
            <person name="Kanehori K."/>
            <person name="Takahashi-Fujii A."/>
            <person name="Hara H."/>
            <person name="Tanase T.-O."/>
            <person name="Nomura Y."/>
            <person name="Togiya S."/>
            <person name="Komai F."/>
            <person name="Hara R."/>
            <person name="Takeuchi K."/>
            <person name="Arita M."/>
            <person name="Imose N."/>
            <person name="Musashino K."/>
            <person name="Yuuki H."/>
            <person name="Oshima A."/>
            <person name="Sasaki N."/>
            <person name="Aotsuka S."/>
            <person name="Yoshikawa Y."/>
            <person name="Matsunawa H."/>
            <person name="Ichihara T."/>
            <person name="Shiohata N."/>
            <person name="Sano S."/>
            <person name="Moriya S."/>
            <person name="Momiyama H."/>
            <person name="Satoh N."/>
            <person name="Takami S."/>
            <person name="Terashima Y."/>
            <person name="Suzuki O."/>
            <person name="Nakagawa S."/>
            <person name="Senoh A."/>
            <person name="Mizoguchi H."/>
            <person name="Goto Y."/>
            <person name="Shimizu F."/>
            <person name="Wakebe H."/>
            <person name="Hishigaki H."/>
            <person name="Watanabe T."/>
            <person name="Sugiyama A."/>
            <person name="Takemoto M."/>
            <person name="Kawakami B."/>
            <person name="Yamazaki M."/>
            <person name="Watanabe K."/>
            <person name="Kumagai A."/>
            <person name="Itakura S."/>
            <person name="Fukuzumi Y."/>
            <person name="Fujimori Y."/>
            <person name="Komiyama M."/>
            <person name="Tashiro H."/>
            <person name="Tanigami A."/>
            <person name="Fujiwara T."/>
            <person name="Ono T."/>
            <person name="Yamada K."/>
            <person name="Fujii Y."/>
            <person name="Ozaki K."/>
            <person name="Hirao M."/>
            <person name="Ohmori Y."/>
            <person name="Kawabata A."/>
            <person name="Hikiji T."/>
            <person name="Kobatake N."/>
            <person name="Inagaki H."/>
            <person name="Ikema Y."/>
            <person name="Okamoto S."/>
            <person name="Okitani R."/>
            <person name="Kawakami T."/>
            <person name="Noguchi S."/>
            <person name="Itoh T."/>
            <person name="Shigeta K."/>
            <person name="Senba T."/>
            <person name="Matsumura K."/>
            <person name="Nakajima Y."/>
            <person name="Mizuno T."/>
            <person name="Morinaga M."/>
            <person name="Sasaki M."/>
            <person name="Togashi T."/>
            <person name="Oyama M."/>
            <person name="Hata H."/>
            <person name="Watanabe M."/>
            <person name="Komatsu T."/>
            <person name="Mizushima-Sugano J."/>
            <person name="Satoh T."/>
            <person name="Shirai Y."/>
            <person name="Takahashi Y."/>
            <person name="Nakagawa K."/>
            <person name="Okumura K."/>
            <person name="Nagase T."/>
            <person name="Nomura N."/>
            <person name="Kikuchi H."/>
            <person name="Masuho Y."/>
            <person name="Yamashita R."/>
            <person name="Nakai K."/>
            <person name="Yada T."/>
            <person name="Nakamura Y."/>
            <person name="Ohara O."/>
            <person name="Isogai T."/>
            <person name="Sugano S."/>
        </authorList>
    </citation>
    <scope>NUCLEOTIDE SEQUENCE [LARGE SCALE MRNA] (ISOFORM 1)</scope>
    <source>
        <tissue>Tongue</tissue>
    </source>
</reference>
<reference key="4">
    <citation type="journal article" date="2006" name="Nature">
        <title>The finished DNA sequence of human chromosome 12.</title>
        <authorList>
            <person name="Scherer S.E."/>
            <person name="Muzny D.M."/>
            <person name="Buhay C.J."/>
            <person name="Chen R."/>
            <person name="Cree A."/>
            <person name="Ding Y."/>
            <person name="Dugan-Rocha S."/>
            <person name="Gill R."/>
            <person name="Gunaratne P."/>
            <person name="Harris R.A."/>
            <person name="Hawes A.C."/>
            <person name="Hernandez J."/>
            <person name="Hodgson A.V."/>
            <person name="Hume J."/>
            <person name="Jackson A."/>
            <person name="Khan Z.M."/>
            <person name="Kovar-Smith C."/>
            <person name="Lewis L.R."/>
            <person name="Lozado R.J."/>
            <person name="Metzker M.L."/>
            <person name="Milosavljevic A."/>
            <person name="Miner G.R."/>
            <person name="Montgomery K.T."/>
            <person name="Morgan M.B."/>
            <person name="Nazareth L.V."/>
            <person name="Scott G."/>
            <person name="Sodergren E."/>
            <person name="Song X.-Z."/>
            <person name="Steffen D."/>
            <person name="Lovering R.C."/>
            <person name="Wheeler D.A."/>
            <person name="Worley K.C."/>
            <person name="Yuan Y."/>
            <person name="Zhang Z."/>
            <person name="Adams C.Q."/>
            <person name="Ansari-Lari M.A."/>
            <person name="Ayele M."/>
            <person name="Brown M.J."/>
            <person name="Chen G."/>
            <person name="Chen Z."/>
            <person name="Clerc-Blankenburg K.P."/>
            <person name="Davis C."/>
            <person name="Delgado O."/>
            <person name="Dinh H.H."/>
            <person name="Draper H."/>
            <person name="Gonzalez-Garay M.L."/>
            <person name="Havlak P."/>
            <person name="Jackson L.R."/>
            <person name="Jacob L.S."/>
            <person name="Kelly S.H."/>
            <person name="Li L."/>
            <person name="Li Z."/>
            <person name="Liu J."/>
            <person name="Liu W."/>
            <person name="Lu J."/>
            <person name="Maheshwari M."/>
            <person name="Nguyen B.-V."/>
            <person name="Okwuonu G.O."/>
            <person name="Pasternak S."/>
            <person name="Perez L.M."/>
            <person name="Plopper F.J.H."/>
            <person name="Santibanez J."/>
            <person name="Shen H."/>
            <person name="Tabor P.E."/>
            <person name="Verduzco D."/>
            <person name="Waldron L."/>
            <person name="Wang Q."/>
            <person name="Williams G.A."/>
            <person name="Zhang J."/>
            <person name="Zhou J."/>
            <person name="Allen C.C."/>
            <person name="Amin A.G."/>
            <person name="Anyalebechi V."/>
            <person name="Bailey M."/>
            <person name="Barbaria J.A."/>
            <person name="Bimage K.E."/>
            <person name="Bryant N.P."/>
            <person name="Burch P.E."/>
            <person name="Burkett C.E."/>
            <person name="Burrell K.L."/>
            <person name="Calderon E."/>
            <person name="Cardenas V."/>
            <person name="Carter K."/>
            <person name="Casias K."/>
            <person name="Cavazos I."/>
            <person name="Cavazos S.R."/>
            <person name="Ceasar H."/>
            <person name="Chacko J."/>
            <person name="Chan S.N."/>
            <person name="Chavez D."/>
            <person name="Christopoulos C."/>
            <person name="Chu J."/>
            <person name="Cockrell R."/>
            <person name="Cox C.D."/>
            <person name="Dang M."/>
            <person name="Dathorne S.R."/>
            <person name="David R."/>
            <person name="Davis C.M."/>
            <person name="Davy-Carroll L."/>
            <person name="Deshazo D.R."/>
            <person name="Donlin J.E."/>
            <person name="D'Souza L."/>
            <person name="Eaves K.A."/>
            <person name="Egan A."/>
            <person name="Emery-Cohen A.J."/>
            <person name="Escotto M."/>
            <person name="Flagg N."/>
            <person name="Forbes L.D."/>
            <person name="Gabisi A.M."/>
            <person name="Garza M."/>
            <person name="Hamilton C."/>
            <person name="Henderson N."/>
            <person name="Hernandez O."/>
            <person name="Hines S."/>
            <person name="Hogues M.E."/>
            <person name="Huang M."/>
            <person name="Idlebird D.G."/>
            <person name="Johnson R."/>
            <person name="Jolivet A."/>
            <person name="Jones S."/>
            <person name="Kagan R."/>
            <person name="King L.M."/>
            <person name="Leal B."/>
            <person name="Lebow H."/>
            <person name="Lee S."/>
            <person name="LeVan J.M."/>
            <person name="Lewis L.C."/>
            <person name="London P."/>
            <person name="Lorensuhewa L.M."/>
            <person name="Loulseged H."/>
            <person name="Lovett D.A."/>
            <person name="Lucier A."/>
            <person name="Lucier R.L."/>
            <person name="Ma J."/>
            <person name="Madu R.C."/>
            <person name="Mapua P."/>
            <person name="Martindale A.D."/>
            <person name="Martinez E."/>
            <person name="Massey E."/>
            <person name="Mawhiney S."/>
            <person name="Meador M.G."/>
            <person name="Mendez S."/>
            <person name="Mercado C."/>
            <person name="Mercado I.C."/>
            <person name="Merritt C.E."/>
            <person name="Miner Z.L."/>
            <person name="Minja E."/>
            <person name="Mitchell T."/>
            <person name="Mohabbat F."/>
            <person name="Mohabbat K."/>
            <person name="Montgomery B."/>
            <person name="Moore N."/>
            <person name="Morris S."/>
            <person name="Munidasa M."/>
            <person name="Ngo R.N."/>
            <person name="Nguyen N.B."/>
            <person name="Nickerson E."/>
            <person name="Nwaokelemeh O.O."/>
            <person name="Nwokenkwo S."/>
            <person name="Obregon M."/>
            <person name="Oguh M."/>
            <person name="Oragunye N."/>
            <person name="Oviedo R.J."/>
            <person name="Parish B.J."/>
            <person name="Parker D.N."/>
            <person name="Parrish J."/>
            <person name="Parks K.L."/>
            <person name="Paul H.A."/>
            <person name="Payton B.A."/>
            <person name="Perez A."/>
            <person name="Perrin W."/>
            <person name="Pickens A."/>
            <person name="Primus E.L."/>
            <person name="Pu L.-L."/>
            <person name="Puazo M."/>
            <person name="Quiles M.M."/>
            <person name="Quiroz J.B."/>
            <person name="Rabata D."/>
            <person name="Reeves K."/>
            <person name="Ruiz S.J."/>
            <person name="Shao H."/>
            <person name="Sisson I."/>
            <person name="Sonaike T."/>
            <person name="Sorelle R.P."/>
            <person name="Sutton A.E."/>
            <person name="Svatek A.F."/>
            <person name="Svetz L.A."/>
            <person name="Tamerisa K.S."/>
            <person name="Taylor T.R."/>
            <person name="Teague B."/>
            <person name="Thomas N."/>
            <person name="Thorn R.D."/>
            <person name="Trejos Z.Y."/>
            <person name="Trevino B.K."/>
            <person name="Ukegbu O.N."/>
            <person name="Urban J.B."/>
            <person name="Vasquez L.I."/>
            <person name="Vera V.A."/>
            <person name="Villasana D.M."/>
            <person name="Wang L."/>
            <person name="Ward-Moore S."/>
            <person name="Warren J.T."/>
            <person name="Wei X."/>
            <person name="White F."/>
            <person name="Williamson A.L."/>
            <person name="Wleczyk R."/>
            <person name="Wooden H.S."/>
            <person name="Wooden S.H."/>
            <person name="Yen J."/>
            <person name="Yoon L."/>
            <person name="Yoon V."/>
            <person name="Zorrilla S.E."/>
            <person name="Nelson D."/>
            <person name="Kucherlapati R."/>
            <person name="Weinstock G."/>
            <person name="Gibbs R.A."/>
        </authorList>
    </citation>
    <scope>NUCLEOTIDE SEQUENCE [LARGE SCALE GENOMIC DNA]</scope>
</reference>
<reference key="5">
    <citation type="submission" date="2005-07" db="EMBL/GenBank/DDBJ databases">
        <authorList>
            <person name="Mural R.J."/>
            <person name="Istrail S."/>
            <person name="Sutton G.G."/>
            <person name="Florea L."/>
            <person name="Halpern A.L."/>
            <person name="Mobarry C.M."/>
            <person name="Lippert R."/>
            <person name="Walenz B."/>
            <person name="Shatkay H."/>
            <person name="Dew I."/>
            <person name="Miller J.R."/>
            <person name="Flanigan M.J."/>
            <person name="Edwards N.J."/>
            <person name="Bolanos R."/>
            <person name="Fasulo D."/>
            <person name="Halldorsson B.V."/>
            <person name="Hannenhalli S."/>
            <person name="Turner R."/>
            <person name="Yooseph S."/>
            <person name="Lu F."/>
            <person name="Nusskern D.R."/>
            <person name="Shue B.C."/>
            <person name="Zheng X.H."/>
            <person name="Zhong F."/>
            <person name="Delcher A.L."/>
            <person name="Huson D.H."/>
            <person name="Kravitz S.A."/>
            <person name="Mouchard L."/>
            <person name="Reinert K."/>
            <person name="Remington K.A."/>
            <person name="Clark A.G."/>
            <person name="Waterman M.S."/>
            <person name="Eichler E.E."/>
            <person name="Adams M.D."/>
            <person name="Hunkapiller M.W."/>
            <person name="Myers E.W."/>
            <person name="Venter J.C."/>
        </authorList>
    </citation>
    <scope>NUCLEOTIDE SEQUENCE [LARGE SCALE GENOMIC DNA]</scope>
</reference>
<reference key="6">
    <citation type="journal article" date="2004" name="Genome Res.">
        <title>The status, quality, and expansion of the NIH full-length cDNA project: the Mammalian Gene Collection (MGC).</title>
        <authorList>
            <consortium name="The MGC Project Team"/>
        </authorList>
    </citation>
    <scope>NUCLEOTIDE SEQUENCE [LARGE SCALE MRNA] (ISOFORM 2)</scope>
    <source>
        <tissue>Colon</tissue>
    </source>
</reference>
<reference key="7">
    <citation type="journal article" date="2002" name="J. Biol. Chem.">
        <title>Suppression of estrogen receptor-mediated transcription and cell growth by interaction with TR2 orphan receptor.</title>
        <authorList>
            <person name="Hu Y.C."/>
            <person name="Shyr C.R."/>
            <person name="Che W."/>
            <person name="Mu X.M."/>
            <person name="Kim E."/>
            <person name="Chang C."/>
        </authorList>
    </citation>
    <scope>FUNCTION</scope>
    <scope>INTERACTION WITH ESR1</scope>
</reference>
<reference key="8">
    <citation type="journal article" date="2006" name="Biochem. Biophys. Res. Commun.">
        <title>Transcriptional regulation of the human TR2 orphan receptor gene by nuclear factor 1-A.</title>
        <authorList>
            <person name="Lin Y.L."/>
            <person name="Wang Y.H."/>
            <person name="Lee H.J."/>
        </authorList>
    </citation>
    <scope>FUNCTION</scope>
</reference>
<reference key="9">
    <citation type="journal article" date="2008" name="Proc. Natl. Acad. Sci. U.S.A.">
        <title>A quantitative atlas of mitotic phosphorylation.</title>
        <authorList>
            <person name="Dephoure N."/>
            <person name="Zhou C."/>
            <person name="Villen J."/>
            <person name="Beausoleil S.A."/>
            <person name="Bakalarski C.E."/>
            <person name="Elledge S.J."/>
            <person name="Gygi S.P."/>
        </authorList>
    </citation>
    <scope>PHOSPHORYLATION [LARGE SCALE ANALYSIS] AT SER-215 AND THR-220</scope>
    <scope>IDENTIFICATION BY MASS SPECTROMETRY [LARGE SCALE ANALYSIS]</scope>
    <source>
        <tissue>Cervix carcinoma</tissue>
    </source>
</reference>
<reference key="10">
    <citation type="journal article" date="2010" name="Sci. Signal.">
        <title>Quantitative phosphoproteomics reveals widespread full phosphorylation site occupancy during mitosis.</title>
        <authorList>
            <person name="Olsen J.V."/>
            <person name="Vermeulen M."/>
            <person name="Santamaria A."/>
            <person name="Kumar C."/>
            <person name="Miller M.L."/>
            <person name="Jensen L.J."/>
            <person name="Gnad F."/>
            <person name="Cox J."/>
            <person name="Jensen T.S."/>
            <person name="Nigg E.A."/>
            <person name="Brunak S."/>
            <person name="Mann M."/>
        </authorList>
    </citation>
    <scope>IDENTIFICATION BY MASS SPECTROMETRY [LARGE SCALE ANALYSIS]</scope>
    <source>
        <tissue>Cervix carcinoma</tissue>
    </source>
</reference>
<reference key="11">
    <citation type="journal article" date="2013" name="J. Proteome Res.">
        <title>Toward a comprehensive characterization of a human cancer cell phosphoproteome.</title>
        <authorList>
            <person name="Zhou H."/>
            <person name="Di Palma S."/>
            <person name="Preisinger C."/>
            <person name="Peng M."/>
            <person name="Polat A.N."/>
            <person name="Heck A.J."/>
            <person name="Mohammed S."/>
        </authorList>
    </citation>
    <scope>PHOSPHORYLATION [LARGE SCALE ANALYSIS] AT SER-215</scope>
    <scope>IDENTIFICATION BY MASS SPECTROMETRY [LARGE SCALE ANALYSIS]</scope>
    <source>
        <tissue>Cervix carcinoma</tissue>
        <tissue>Erythroleukemia</tissue>
    </source>
</reference>
<reference key="12">
    <citation type="journal article" date="2017" name="Nat. Struct. Mol. Biol.">
        <title>Site-specific mapping of the human SUMO proteome reveals co-modification with phosphorylation.</title>
        <authorList>
            <person name="Hendriks I.A."/>
            <person name="Lyon D."/>
            <person name="Young C."/>
            <person name="Jensen L.J."/>
            <person name="Vertegaal A.C."/>
            <person name="Nielsen M.L."/>
        </authorList>
    </citation>
    <scope>SUMOYLATION [LARGE SCALE ANALYSIS] AT LYS-250 AND LYS-588</scope>
    <scope>IDENTIFICATION BY MASS SPECTROMETRY [LARGE SCALE ANALYSIS]</scope>
</reference>
<sequence length="603" mass="67315">MATIEEIAHQIIEQQMGEIVTEQQTGQKIQIVTALDHNTQGKQFILTNHDGSTPSKVILARQDSTPGKVFLTTPDAAGVNQLFFTTPDLSAQHLQLLTDNSPDQGPNKVFDLCVVCGDKASGRHYGAVTCEGCKGFFKRSIRKNLVYSCRGSKDCIINKHHRNRCQYCRLQRCIAFGMKQDSVQCERKPIEVSREKSSNCAASTEKIYIRKDLRSPLTATPTFVTDSESTRSTGLLDSGMFMNIHPSGVKTESAVLMTSDKAESCQGDLSTLANVVTSLANLGKTKDLSQNSNEMSMIESLSNDDTSLCEFQEMQTNGDVSRAFDTLAKALNPGESTACQSSVAGMEGSVHLITGDSSINYTEKEGPLLSDSHVAFRLTMPSPMPEYLNVHYIGESASRLLFLSMHWALSIPSFQALGQENSISLVKAYWNELFTLGLAQCWQVMNVATILATFVNCLHNSLQQDKMSTERRKLLMEHIFKLQEFCNSMVKLCIDGYEYAYLKAIVLFSPDHPSLENMEQIEKFQEKAYVEFQDYITKTYPDDTYRLSRLLLRLPALRLMNATITEELFFKGLIGNIRIDSVIPHILKMEPADYNSQIIGHSI</sequence>
<protein>
    <recommendedName>
        <fullName>Nuclear receptor subfamily 2 group C member 1</fullName>
    </recommendedName>
    <alternativeName>
        <fullName>Orphan nuclear receptor TR2</fullName>
    </alternativeName>
    <alternativeName>
        <fullName>Testicular receptor 2</fullName>
    </alternativeName>
</protein>
<comment type="function">
    <text evidence="5 6">Orphan nuclear receptor. Binds the IR7 element in the promoter of its own gene in an autoregulatory negative feedback mechanism. Primarily repressor of a broad range of genes. Binds to hormone response elements (HREs) consisting of two 5'-AGGTCA-3' half site direct repeat consensus sequences. Together with NR2C2, forms the core of the DRED (direct repeat erythroid-definitive) complex that represses embryonic and fetal globin transcription. Also activator of OCT4 gene expression. May be involved in stem cell proliferation and differentiation. Mediator of retinoic acid-regulated preadipocyte proliferation.</text>
</comment>
<comment type="subunit">
    <text evidence="1 5">Homodimer (By similarity). Heterodimer; binds DNA as a heterodimer with NR2C2 required for chromatin remodeling and for binding to promoter regions such as globin DR1 repeats (By similarity). Interacts with NRIP1 (via its LXXLL motifs); the interaction provides corepressor activity. Interacts with HDAC3 (via the DNA-binding domain). Interacts with HDAC4 (via the DNA-binding domain). Interacts with PIAS1; the interaction is required for sumoylation of NR2C1. Interacts with UBE2I; the interaction is required for sumoylation of NR2C1. Interacts with KAT2B; the interaction acts as a corepressor of gene expression (By similarity). Interacts with ESR1; the interaction prevents homodimerization of ESR1 and suppresses its transcriptional activity and cell growth.</text>
</comment>
<comment type="interaction">
    <interactant intactId="EBI-18764867">
        <id>P13056-2</id>
    </interactant>
    <interactant intactId="EBI-413374">
        <id>P10276</id>
        <label>RARA</label>
    </interactant>
    <organismsDiffer>false</organismsDiffer>
    <experiments>3</experiments>
</comment>
<comment type="subcellular location">
    <subcellularLocation>
        <location evidence="3">Nucleus</location>
    </subcellularLocation>
    <subcellularLocation>
        <location evidence="1">Nucleus</location>
        <location evidence="1">PML body</location>
    </subcellularLocation>
    <text evidence="1">Recruited by HDAC3, after all-trans retinoic acid stimulated MAPK1-mediated Thr-223 phosphorylation, to PML bodies for subsequent sumoylation.</text>
</comment>
<comment type="alternative products">
    <event type="alternative splicing"/>
    <isoform>
        <id>P13056-1</id>
        <name>1</name>
        <name>TR2-11</name>
        <sequence type="displayed"/>
    </isoform>
    <isoform>
        <id>P13056-2</id>
        <name>2</name>
        <name>TR2-9</name>
        <sequence type="described" ref="VSP_036855 VSP_036857"/>
    </isoform>
    <isoform>
        <id>P13056-3</id>
        <name>3</name>
        <name>TR2-7</name>
        <sequence type="described" ref="VSP_036856 VSP_036858"/>
    </isoform>
</comment>
<comment type="PTM">
    <text evidence="1">Sumoylation requires both PIAS1 and UBE2I. Sumoylation appears to dissociate NR2C1 from the PML nuclear bodies. Enhances the interaction with NRIP1 but inhibits interaction with KAT2B. In proliferating cells, stimulation by all-trans retinoic acid, activation of MAPK1-mediated phosphorylation and recruitment to PML bodies with subsequent sumoylation, suppresses OCT4 expression (By similarity).</text>
</comment>
<comment type="PTM">
    <text evidence="1">Phosphorylated on several serine and threonine residues. Phosphorylation on Thr-222, stimulated by all-trans retinoic acid (atRA) mediates PML location and sumoylation in proliferating cells which then modulates its association with effector molecules, KAT2B and NRIP1. Phosphorylation on Ser-581 by PKC is important for protein stability and function as activator of RARB (By similarity).</text>
</comment>
<comment type="similarity">
    <text evidence="10">Belongs to the nuclear hormone receptor family. NR2 subfamily.</text>
</comment>
<keyword id="KW-0010">Activator</keyword>
<keyword id="KW-0025">Alternative splicing</keyword>
<keyword id="KW-0238">DNA-binding</keyword>
<keyword id="KW-1017">Isopeptide bond</keyword>
<keyword id="KW-0479">Metal-binding</keyword>
<keyword id="KW-0539">Nucleus</keyword>
<keyword id="KW-0597">Phosphoprotein</keyword>
<keyword id="KW-1267">Proteomics identification</keyword>
<keyword id="KW-0675">Receptor</keyword>
<keyword id="KW-1185">Reference proteome</keyword>
<keyword id="KW-0678">Repressor</keyword>
<keyword id="KW-0804">Transcription</keyword>
<keyword id="KW-0805">Transcription regulation</keyword>
<keyword id="KW-0832">Ubl conjugation</keyword>
<keyword id="KW-0862">Zinc</keyword>
<keyword id="KW-0863">Zinc-finger</keyword>
<evidence type="ECO:0000250" key="1"/>
<evidence type="ECO:0000250" key="2">
    <source>
        <dbReference type="UniProtKB" id="Q505F1"/>
    </source>
</evidence>
<evidence type="ECO:0000255" key="3">
    <source>
        <dbReference type="PROSITE-ProRule" id="PRU00407"/>
    </source>
</evidence>
<evidence type="ECO:0000255" key="4">
    <source>
        <dbReference type="PROSITE-ProRule" id="PRU01189"/>
    </source>
</evidence>
<evidence type="ECO:0000269" key="5">
    <source>
    </source>
</evidence>
<evidence type="ECO:0000269" key="6">
    <source>
    </source>
</evidence>
<evidence type="ECO:0000303" key="7">
    <source>
    </source>
</evidence>
<evidence type="ECO:0000303" key="8">
    <source>
    </source>
</evidence>
<evidence type="ECO:0000303" key="9">
    <source>
    </source>
</evidence>
<evidence type="ECO:0000305" key="10"/>
<evidence type="ECO:0007744" key="11">
    <source>
    </source>
</evidence>
<evidence type="ECO:0007744" key="12">
    <source>
    </source>
</evidence>
<evidence type="ECO:0007744" key="13">
    <source>
    </source>
</evidence>
<gene>
    <name type="primary">NR2C1</name>
    <name type="synonym">TR2</name>
</gene>
<accession>P13056</accession>
<accession>A8K5K4</accession>
<accession>Q15625</accession>
<accession>Q15626</accession>